<keyword id="KW-0997">Cell inner membrane</keyword>
<keyword id="KW-1003">Cell membrane</keyword>
<keyword id="KW-0472">Membrane</keyword>
<keyword id="KW-0812">Transmembrane</keyword>
<keyword id="KW-1133">Transmembrane helix</keyword>
<gene>
    <name evidence="1" type="primary">yciC</name>
    <name type="ordered locus">UTI89_C1455</name>
</gene>
<dbReference type="EMBL" id="CP000243">
    <property type="protein sequence ID" value="ABE06935.1"/>
    <property type="molecule type" value="Genomic_DNA"/>
</dbReference>
<dbReference type="RefSeq" id="WP_000028546.1">
    <property type="nucleotide sequence ID" value="NZ_CP064825.1"/>
</dbReference>
<dbReference type="KEGG" id="eci:UTI89_C1455"/>
<dbReference type="HOGENOM" id="CLU_073287_0_0_6"/>
<dbReference type="Proteomes" id="UP000001952">
    <property type="component" value="Chromosome"/>
</dbReference>
<dbReference type="GO" id="GO:0005886">
    <property type="term" value="C:plasma membrane"/>
    <property type="evidence" value="ECO:0007669"/>
    <property type="project" value="UniProtKB-SubCell"/>
</dbReference>
<dbReference type="HAMAP" id="MF_01067">
    <property type="entry name" value="UPF0259"/>
    <property type="match status" value="1"/>
</dbReference>
<dbReference type="InterPro" id="IPR009627">
    <property type="entry name" value="UPF0259"/>
</dbReference>
<dbReference type="NCBIfam" id="NF002774">
    <property type="entry name" value="PRK02868.1"/>
    <property type="match status" value="1"/>
</dbReference>
<dbReference type="Pfam" id="PF06790">
    <property type="entry name" value="UPF0259"/>
    <property type="match status" value="1"/>
</dbReference>
<comment type="subcellular location">
    <subcellularLocation>
        <location evidence="1">Cell inner membrane</location>
        <topology evidence="1">Multi-pass membrane protein</topology>
    </subcellularLocation>
</comment>
<comment type="similarity">
    <text evidence="1">Belongs to the UPF0259 family.</text>
</comment>
<protein>
    <recommendedName>
        <fullName evidence="1">UPF0259 membrane protein YciC</fullName>
    </recommendedName>
</protein>
<proteinExistence type="inferred from homology"/>
<sequence>MSITAQSVYRDTGNFFRNQFMTILLVSLLCAFITVVLGHVFSPSDAQLAQLNDGVPVSGSSGLFDLVQNMSPEQQQILLQASAASTFSGLIGNAILAGGVILIIQLVSAGQRVSALRAIGASAPILPKLFILIFLTTLLVQIGIMLVVVPGIIMAILLALAPVMLVQDKMGVFASMRSSMRLTWANMRLVAPAVLSWLLAKTLLLLFASSFAALTPEIGAVLANTLSNLISAVLLIYLFRLYMLIRQ</sequence>
<organism>
    <name type="scientific">Escherichia coli (strain UTI89 / UPEC)</name>
    <dbReference type="NCBI Taxonomy" id="364106"/>
    <lineage>
        <taxon>Bacteria</taxon>
        <taxon>Pseudomonadati</taxon>
        <taxon>Pseudomonadota</taxon>
        <taxon>Gammaproteobacteria</taxon>
        <taxon>Enterobacterales</taxon>
        <taxon>Enterobacteriaceae</taxon>
        <taxon>Escherichia</taxon>
    </lineage>
</organism>
<name>YCIC_ECOUT</name>
<evidence type="ECO:0000255" key="1">
    <source>
        <dbReference type="HAMAP-Rule" id="MF_01067"/>
    </source>
</evidence>
<feature type="chain" id="PRO_1000064524" description="UPF0259 membrane protein YciC">
    <location>
        <begin position="1"/>
        <end position="247"/>
    </location>
</feature>
<feature type="transmembrane region" description="Helical" evidence="1">
    <location>
        <begin position="20"/>
        <end position="40"/>
    </location>
</feature>
<feature type="transmembrane region" description="Helical" evidence="1">
    <location>
        <begin position="87"/>
        <end position="107"/>
    </location>
</feature>
<feature type="transmembrane region" description="Helical" evidence="1">
    <location>
        <begin position="118"/>
        <end position="140"/>
    </location>
</feature>
<feature type="transmembrane region" description="Helical" evidence="1">
    <location>
        <begin position="152"/>
        <end position="172"/>
    </location>
</feature>
<feature type="transmembrane region" description="Helical" evidence="1">
    <location>
        <begin position="187"/>
        <end position="209"/>
    </location>
</feature>
<feature type="transmembrane region" description="Helical" evidence="1">
    <location>
        <begin position="225"/>
        <end position="245"/>
    </location>
</feature>
<reference key="1">
    <citation type="journal article" date="2006" name="Proc. Natl. Acad. Sci. U.S.A.">
        <title>Identification of genes subject to positive selection in uropathogenic strains of Escherichia coli: a comparative genomics approach.</title>
        <authorList>
            <person name="Chen S.L."/>
            <person name="Hung C.-S."/>
            <person name="Xu J."/>
            <person name="Reigstad C.S."/>
            <person name="Magrini V."/>
            <person name="Sabo A."/>
            <person name="Blasiar D."/>
            <person name="Bieri T."/>
            <person name="Meyer R.R."/>
            <person name="Ozersky P."/>
            <person name="Armstrong J.R."/>
            <person name="Fulton R.S."/>
            <person name="Latreille J.P."/>
            <person name="Spieth J."/>
            <person name="Hooton T.M."/>
            <person name="Mardis E.R."/>
            <person name="Hultgren S.J."/>
            <person name="Gordon J.I."/>
        </authorList>
    </citation>
    <scope>NUCLEOTIDE SEQUENCE [LARGE SCALE GENOMIC DNA]</scope>
    <source>
        <strain>UTI89 / UPEC</strain>
    </source>
</reference>
<accession>Q1RCH9</accession>